<feature type="chain" id="PRO_0000444511" description="LBH domain-containing protein 2">
    <location>
        <begin position="1"/>
        <end position="108"/>
    </location>
</feature>
<feature type="domain" description="LBH" evidence="1">
    <location>
        <begin position="37"/>
        <end position="62"/>
    </location>
</feature>
<feature type="region of interest" description="Disordered" evidence="2">
    <location>
        <begin position="1"/>
        <end position="108"/>
    </location>
</feature>
<feature type="compositionally biased region" description="Pro residues" evidence="2">
    <location>
        <begin position="1"/>
        <end position="11"/>
    </location>
</feature>
<feature type="compositionally biased region" description="Low complexity" evidence="2">
    <location>
        <begin position="63"/>
        <end position="85"/>
    </location>
</feature>
<proteinExistence type="evidence at protein level"/>
<protein>
    <recommendedName>
        <fullName evidence="3">LBH domain-containing protein 2</fullName>
    </recommendedName>
</protein>
<evidence type="ECO:0000255" key="1"/>
<evidence type="ECO:0000256" key="2">
    <source>
        <dbReference type="SAM" id="MobiDB-lite"/>
    </source>
</evidence>
<evidence type="ECO:0000305" key="3"/>
<evidence type="ECO:0000312" key="4">
    <source>
        <dbReference type="HGNC" id="HGNC:52384"/>
    </source>
</evidence>
<accession>A0A0U1RRK4</accession>
<name>LBHD2_HUMAN</name>
<dbReference type="EMBL" id="AL161669">
    <property type="status" value="NOT_ANNOTATED_CDS"/>
    <property type="molecule type" value="Genomic_DNA"/>
</dbReference>
<dbReference type="CCDS" id="CCDS81855.1"/>
<dbReference type="RefSeq" id="NP_001317165.1">
    <property type="nucleotide sequence ID" value="NM_001330236.2"/>
</dbReference>
<dbReference type="BioMuta" id="ENSG00000283071"/>
<dbReference type="MassIVE" id="A0A0U1RRK4"/>
<dbReference type="PeptideAtlas" id="A0A0U1RRK4"/>
<dbReference type="DNASU" id="107984640"/>
<dbReference type="Ensembl" id="ENST00000634353.1">
    <property type="protein sequence ID" value="ENSP00000489570.1"/>
    <property type="gene ID" value="ENSG00000283071.1"/>
</dbReference>
<dbReference type="GeneID" id="107984640"/>
<dbReference type="KEGG" id="hsa:107984640"/>
<dbReference type="MANE-Select" id="ENST00000634353.1">
    <property type="protein sequence ID" value="ENSP00000489570.1"/>
    <property type="RefSeq nucleotide sequence ID" value="NM_001330236.2"/>
    <property type="RefSeq protein sequence ID" value="NP_001317165.1"/>
</dbReference>
<dbReference type="AGR" id="HGNC:52384"/>
<dbReference type="CTD" id="107984640"/>
<dbReference type="DisGeNET" id="107984640"/>
<dbReference type="GeneCards" id="LBHD2"/>
<dbReference type="HGNC" id="HGNC:52384">
    <property type="gene designation" value="LBHD2"/>
</dbReference>
<dbReference type="HPA" id="ENSG00000283071">
    <property type="expression patterns" value="Tissue enhanced (brain, testis)"/>
</dbReference>
<dbReference type="neXtProt" id="NX_A0A0U1RRK4"/>
<dbReference type="VEuPathDB" id="HostDB:ENSG00000283071"/>
<dbReference type="GeneTree" id="ENSGT00610000087423"/>
<dbReference type="InParanoid" id="A0A0U1RRK4"/>
<dbReference type="OMA" id="AGSECAC"/>
<dbReference type="OrthoDB" id="9421103at2759"/>
<dbReference type="PAN-GO" id="A0A0U1RRK4">
    <property type="GO annotations" value="0 GO annotations based on evolutionary models"/>
</dbReference>
<dbReference type="PathwayCommons" id="A0A0U1RRK4"/>
<dbReference type="BioGRID-ORCS" id="107984640">
    <property type="hits" value="0 hits in 2 CRISPR screens"/>
</dbReference>
<dbReference type="Pharos" id="A0A0U1RRK4">
    <property type="development level" value="Tdark"/>
</dbReference>
<dbReference type="PRO" id="PR:A0A0U1RRK4"/>
<dbReference type="Proteomes" id="UP000005640">
    <property type="component" value="Chromosome 14"/>
</dbReference>
<dbReference type="RNAct" id="A0A0U1RRK4">
    <property type="molecule type" value="protein"/>
</dbReference>
<dbReference type="Bgee" id="ENSG00000283071">
    <property type="expression patterns" value="Expressed in primordial germ cell in gonad and 53 other cell types or tissues"/>
</dbReference>
<dbReference type="InterPro" id="IPR038990">
    <property type="entry name" value="LBH_dom"/>
</dbReference>
<dbReference type="InterPro" id="IPR042945">
    <property type="entry name" value="LBH_dom_prot"/>
</dbReference>
<dbReference type="PANTHER" id="PTHR14987:SF3">
    <property type="entry name" value="LBH DOMAIN-CONTAINING PROTEIN 2"/>
    <property type="match status" value="1"/>
</dbReference>
<dbReference type="PANTHER" id="PTHR14987">
    <property type="entry name" value="PROTEIN LBH-RELATED"/>
    <property type="match status" value="1"/>
</dbReference>
<dbReference type="Pfam" id="PF15317">
    <property type="entry name" value="Lbh"/>
    <property type="match status" value="1"/>
</dbReference>
<sequence length="108" mass="10701">MSTPRPAPPQPGAAEGAGGPEGKAVAGAWEKGPRLGQRLPSIVVEPSEADPVESGELRWPLESAQRGPSQSRAAAAPSPSLPGEPGKAADNAGSECACSEDPAAPARG</sequence>
<gene>
    <name evidence="4" type="primary">LBHD2</name>
</gene>
<reference key="1">
    <citation type="journal article" date="2003" name="Nature">
        <title>The DNA sequence and analysis of human chromosome 14.</title>
        <authorList>
            <person name="Heilig R."/>
            <person name="Eckenberg R."/>
            <person name="Petit J.-L."/>
            <person name="Fonknechten N."/>
            <person name="Da Silva C."/>
            <person name="Cattolico L."/>
            <person name="Levy M."/>
            <person name="Barbe V."/>
            <person name="De Berardinis V."/>
            <person name="Ureta-Vidal A."/>
            <person name="Pelletier E."/>
            <person name="Vico V."/>
            <person name="Anthouard V."/>
            <person name="Rowen L."/>
            <person name="Madan A."/>
            <person name="Qin S."/>
            <person name="Sun H."/>
            <person name="Du H."/>
            <person name="Pepin K."/>
            <person name="Artiguenave F."/>
            <person name="Robert C."/>
            <person name="Cruaud C."/>
            <person name="Bruels T."/>
            <person name="Jaillon O."/>
            <person name="Friedlander L."/>
            <person name="Samson G."/>
            <person name="Brottier P."/>
            <person name="Cure S."/>
            <person name="Segurens B."/>
            <person name="Aniere F."/>
            <person name="Samain S."/>
            <person name="Crespeau H."/>
            <person name="Abbasi N."/>
            <person name="Aiach N."/>
            <person name="Boscus D."/>
            <person name="Dickhoff R."/>
            <person name="Dors M."/>
            <person name="Dubois I."/>
            <person name="Friedman C."/>
            <person name="Gouyvenoux M."/>
            <person name="James R."/>
            <person name="Madan A."/>
            <person name="Mairey-Estrada B."/>
            <person name="Mangenot S."/>
            <person name="Martins N."/>
            <person name="Menard M."/>
            <person name="Oztas S."/>
            <person name="Ratcliffe A."/>
            <person name="Shaffer T."/>
            <person name="Trask B."/>
            <person name="Vacherie B."/>
            <person name="Bellemere C."/>
            <person name="Belser C."/>
            <person name="Besnard-Gonnet M."/>
            <person name="Bartol-Mavel D."/>
            <person name="Boutard M."/>
            <person name="Briez-Silla S."/>
            <person name="Combette S."/>
            <person name="Dufosse-Laurent V."/>
            <person name="Ferron C."/>
            <person name="Lechaplais C."/>
            <person name="Louesse C."/>
            <person name="Muselet D."/>
            <person name="Magdelenat G."/>
            <person name="Pateau E."/>
            <person name="Petit E."/>
            <person name="Sirvain-Trukniewicz P."/>
            <person name="Trybou A."/>
            <person name="Vega-Czarny N."/>
            <person name="Bataille E."/>
            <person name="Bluet E."/>
            <person name="Bordelais I."/>
            <person name="Dubois M."/>
            <person name="Dumont C."/>
            <person name="Guerin T."/>
            <person name="Haffray S."/>
            <person name="Hammadi R."/>
            <person name="Muanga J."/>
            <person name="Pellouin V."/>
            <person name="Robert D."/>
            <person name="Wunderle E."/>
            <person name="Gauguet G."/>
            <person name="Roy A."/>
            <person name="Sainte-Marthe L."/>
            <person name="Verdier J."/>
            <person name="Verdier-Discala C."/>
            <person name="Hillier L.W."/>
            <person name="Fulton L."/>
            <person name="McPherson J."/>
            <person name="Matsuda F."/>
            <person name="Wilson R."/>
            <person name="Scarpelli C."/>
            <person name="Gyapay G."/>
            <person name="Wincker P."/>
            <person name="Saurin W."/>
            <person name="Quetier F."/>
            <person name="Waterston R."/>
            <person name="Hood L."/>
            <person name="Weissenbach J."/>
        </authorList>
    </citation>
    <scope>NUCLEOTIDE SEQUENCE [LARGE SCALE GENOMIC DNA]</scope>
</reference>
<organism>
    <name type="scientific">Homo sapiens</name>
    <name type="common">Human</name>
    <dbReference type="NCBI Taxonomy" id="9606"/>
    <lineage>
        <taxon>Eukaryota</taxon>
        <taxon>Metazoa</taxon>
        <taxon>Chordata</taxon>
        <taxon>Craniata</taxon>
        <taxon>Vertebrata</taxon>
        <taxon>Euteleostomi</taxon>
        <taxon>Mammalia</taxon>
        <taxon>Eutheria</taxon>
        <taxon>Euarchontoglires</taxon>
        <taxon>Primates</taxon>
        <taxon>Haplorrhini</taxon>
        <taxon>Catarrhini</taxon>
        <taxon>Hominidae</taxon>
        <taxon>Homo</taxon>
    </lineage>
</organism>
<keyword id="KW-1267">Proteomics identification</keyword>
<keyword id="KW-1185">Reference proteome</keyword>